<organism>
    <name type="scientific">Arabidopsis thaliana</name>
    <name type="common">Mouse-ear cress</name>
    <dbReference type="NCBI Taxonomy" id="3702"/>
    <lineage>
        <taxon>Eukaryota</taxon>
        <taxon>Viridiplantae</taxon>
        <taxon>Streptophyta</taxon>
        <taxon>Embryophyta</taxon>
        <taxon>Tracheophyta</taxon>
        <taxon>Spermatophyta</taxon>
        <taxon>Magnoliopsida</taxon>
        <taxon>eudicotyledons</taxon>
        <taxon>Gunneridae</taxon>
        <taxon>Pentapetalae</taxon>
        <taxon>rosids</taxon>
        <taxon>malvids</taxon>
        <taxon>Brassicales</taxon>
        <taxon>Brassicaceae</taxon>
        <taxon>Camelineae</taxon>
        <taxon>Arabidopsis</taxon>
    </lineage>
</organism>
<evidence type="ECO:0000250" key="1"/>
<evidence type="ECO:0000305" key="2"/>
<keyword id="KW-1003">Cell membrane</keyword>
<keyword id="KW-0342">GTP-binding</keyword>
<keyword id="KW-0449">Lipoprotein</keyword>
<keyword id="KW-0472">Membrane</keyword>
<keyword id="KW-0547">Nucleotide-binding</keyword>
<keyword id="KW-0636">Prenylation</keyword>
<keyword id="KW-0653">Protein transport</keyword>
<keyword id="KW-1185">Reference proteome</keyword>
<keyword id="KW-0813">Transport</keyword>
<sequence length="216" mass="23870">MAGYRADDEYDYLFKVVLIGDSGVGKSNLLSRFTKNEFSLESKSTIGVEFATRSLNVDDKVIKAQIWDTAGQERYRAITSAYYRGAVGALLVYDVTRHSTFENVETWLKELRNHTDPNIVVMLVGNKSDLRHLVAVQTEDAKSFAEKESLYFMETSALEATNVENAFAEVLTQIHHIVSKKAMEAASESANVPSKGDKIDIGKDVSAVKKGGCCSN</sequence>
<comment type="function">
    <text evidence="1">Intracellular vesicle trafficking and protein transport.</text>
</comment>
<comment type="interaction">
    <interactant intactId="EBI-16886894">
        <id>Q9FK68</id>
    </interactant>
    <interactant intactId="EBI-16920700">
        <id>Q9CAL3</id>
        <label>CRK2</label>
    </interactant>
    <organismsDiffer>false</organismsDiffer>
    <experiments>3</experiments>
</comment>
<comment type="subcellular location">
    <subcellularLocation>
        <location evidence="2">Cell membrane</location>
        <topology evidence="2">Lipid-anchor</topology>
        <orientation evidence="2">Cytoplasmic side</orientation>
    </subcellularLocation>
</comment>
<comment type="similarity">
    <text evidence="2">Belongs to the small GTPase superfamily. Rab family.</text>
</comment>
<reference key="1">
    <citation type="journal article" date="1998" name="DNA Res.">
        <title>Structural analysis of Arabidopsis thaliana chromosome 5. VI. Sequence features of the regions of 1,367,185 bp covered by 19 physically assigned P1 and TAC clones.</title>
        <authorList>
            <person name="Kotani H."/>
            <person name="Nakamura Y."/>
            <person name="Sato S."/>
            <person name="Asamizu E."/>
            <person name="Kaneko T."/>
            <person name="Miyajima N."/>
            <person name="Tabata S."/>
        </authorList>
    </citation>
    <scope>NUCLEOTIDE SEQUENCE [LARGE SCALE GENOMIC DNA]</scope>
    <source>
        <strain>cv. Columbia</strain>
    </source>
</reference>
<reference key="2">
    <citation type="journal article" date="2017" name="Plant J.">
        <title>Araport11: a complete reannotation of the Arabidopsis thaliana reference genome.</title>
        <authorList>
            <person name="Cheng C.Y."/>
            <person name="Krishnakumar V."/>
            <person name="Chan A.P."/>
            <person name="Thibaud-Nissen F."/>
            <person name="Schobel S."/>
            <person name="Town C.D."/>
        </authorList>
    </citation>
    <scope>GENOME REANNOTATION</scope>
    <source>
        <strain>cv. Columbia</strain>
    </source>
</reference>
<reference key="3">
    <citation type="journal article" date="2003" name="Science">
        <title>Empirical analysis of transcriptional activity in the Arabidopsis genome.</title>
        <authorList>
            <person name="Yamada K."/>
            <person name="Lim J."/>
            <person name="Dale J.M."/>
            <person name="Chen H."/>
            <person name="Shinn P."/>
            <person name="Palm C.J."/>
            <person name="Southwick A.M."/>
            <person name="Wu H.C."/>
            <person name="Kim C.J."/>
            <person name="Nguyen M."/>
            <person name="Pham P.K."/>
            <person name="Cheuk R.F."/>
            <person name="Karlin-Newmann G."/>
            <person name="Liu S.X."/>
            <person name="Lam B."/>
            <person name="Sakano H."/>
            <person name="Wu T."/>
            <person name="Yu G."/>
            <person name="Miranda M."/>
            <person name="Quach H.L."/>
            <person name="Tripp M."/>
            <person name="Chang C.H."/>
            <person name="Lee J.M."/>
            <person name="Toriumi M.J."/>
            <person name="Chan M.M."/>
            <person name="Tang C.C."/>
            <person name="Onodera C.S."/>
            <person name="Deng J.M."/>
            <person name="Akiyama K."/>
            <person name="Ansari Y."/>
            <person name="Arakawa T."/>
            <person name="Banh J."/>
            <person name="Banno F."/>
            <person name="Bowser L."/>
            <person name="Brooks S.Y."/>
            <person name="Carninci P."/>
            <person name="Chao Q."/>
            <person name="Choy N."/>
            <person name="Enju A."/>
            <person name="Goldsmith A.D."/>
            <person name="Gurjal M."/>
            <person name="Hansen N.F."/>
            <person name="Hayashizaki Y."/>
            <person name="Johnson-Hopson C."/>
            <person name="Hsuan V.W."/>
            <person name="Iida K."/>
            <person name="Karnes M."/>
            <person name="Khan S."/>
            <person name="Koesema E."/>
            <person name="Ishida J."/>
            <person name="Jiang P.X."/>
            <person name="Jones T."/>
            <person name="Kawai J."/>
            <person name="Kamiya A."/>
            <person name="Meyers C."/>
            <person name="Nakajima M."/>
            <person name="Narusaka M."/>
            <person name="Seki M."/>
            <person name="Sakurai T."/>
            <person name="Satou M."/>
            <person name="Tamse R."/>
            <person name="Vaysberg M."/>
            <person name="Wallender E.K."/>
            <person name="Wong C."/>
            <person name="Yamamura Y."/>
            <person name="Yuan S."/>
            <person name="Shinozaki K."/>
            <person name="Davis R.W."/>
            <person name="Theologis A."/>
            <person name="Ecker J.R."/>
        </authorList>
    </citation>
    <scope>NUCLEOTIDE SEQUENCE [LARGE SCALE MRNA]</scope>
    <source>
        <strain>cv. Columbia</strain>
    </source>
</reference>
<reference key="4">
    <citation type="submission" date="2002-03" db="EMBL/GenBank/DDBJ databases">
        <title>Full-length cDNA from Arabidopsis thaliana.</title>
        <authorList>
            <person name="Brover V.V."/>
            <person name="Troukhan M.E."/>
            <person name="Alexandrov N.A."/>
            <person name="Lu Y.-P."/>
            <person name="Flavell R.B."/>
            <person name="Feldmann K.A."/>
        </authorList>
    </citation>
    <scope>NUCLEOTIDE SEQUENCE [LARGE SCALE MRNA]</scope>
</reference>
<reference key="5">
    <citation type="journal article" date="2003" name="Plant Physiol.">
        <title>Analysis of the small GTPase gene superfamily of Arabidopsis.</title>
        <authorList>
            <person name="Vernoud V."/>
            <person name="Horton A.C."/>
            <person name="Yang Z."/>
            <person name="Nielsen E."/>
        </authorList>
    </citation>
    <scope>GENE FAMILY</scope>
    <scope>NOMENCLATURE</scope>
</reference>
<gene>
    <name type="primary">RABA1C</name>
    <name type="ordered locus">At5g45750</name>
    <name type="ORF">MRA19.18</name>
</gene>
<proteinExistence type="evidence at protein level"/>
<feature type="chain" id="PRO_0000324125" description="Ras-related protein RABA1c">
    <location>
        <begin position="1"/>
        <end position="216"/>
    </location>
</feature>
<feature type="short sequence motif" description="Effector region" evidence="1">
    <location>
        <begin position="42"/>
        <end position="50"/>
    </location>
</feature>
<feature type="binding site" evidence="1">
    <location>
        <begin position="20"/>
        <end position="27"/>
    </location>
    <ligand>
        <name>GTP</name>
        <dbReference type="ChEBI" id="CHEBI:37565"/>
    </ligand>
</feature>
<feature type="binding site" evidence="1">
    <location>
        <begin position="68"/>
        <end position="72"/>
    </location>
    <ligand>
        <name>GTP</name>
        <dbReference type="ChEBI" id="CHEBI:37565"/>
    </ligand>
</feature>
<feature type="binding site" evidence="1">
    <location>
        <begin position="126"/>
        <end position="129"/>
    </location>
    <ligand>
        <name>GTP</name>
        <dbReference type="ChEBI" id="CHEBI:37565"/>
    </ligand>
</feature>
<feature type="binding site" evidence="1">
    <location>
        <begin position="156"/>
        <end position="157"/>
    </location>
    <ligand>
        <name>GTP</name>
        <dbReference type="ChEBI" id="CHEBI:37565"/>
    </ligand>
</feature>
<feature type="lipid moiety-binding region" description="S-geranylgeranyl cysteine" evidence="1">
    <location>
        <position position="213"/>
    </location>
</feature>
<feature type="lipid moiety-binding region" description="S-geranylgeranyl cysteine" evidence="1">
    <location>
        <position position="214"/>
    </location>
</feature>
<feature type="sequence conflict" description="In Ref. 4; AAM60865." evidence="2" ref="4">
    <original>R</original>
    <variation>L</variation>
    <location>
        <position position="32"/>
    </location>
</feature>
<feature type="sequence conflict" description="In Ref. 4; AAM60865." evidence="2" ref="4">
    <original>L</original>
    <variation>F</variation>
    <location>
        <position position="158"/>
    </location>
</feature>
<dbReference type="EMBL" id="AB012245">
    <property type="protein sequence ID" value="BAB09217.1"/>
    <property type="molecule type" value="Genomic_DNA"/>
</dbReference>
<dbReference type="EMBL" id="CP002688">
    <property type="protein sequence ID" value="AED95292.1"/>
    <property type="molecule type" value="Genomic_DNA"/>
</dbReference>
<dbReference type="EMBL" id="AF370219">
    <property type="protein sequence ID" value="AAK44034.1"/>
    <property type="molecule type" value="mRNA"/>
</dbReference>
<dbReference type="EMBL" id="AY059111">
    <property type="protein sequence ID" value="AAL15217.1"/>
    <property type="molecule type" value="mRNA"/>
</dbReference>
<dbReference type="EMBL" id="AY084274">
    <property type="protein sequence ID" value="AAM60865.1"/>
    <property type="molecule type" value="mRNA"/>
</dbReference>
<dbReference type="RefSeq" id="NP_199387.1">
    <property type="nucleotide sequence ID" value="NM_123942.2"/>
</dbReference>
<dbReference type="SMR" id="Q9FK68"/>
<dbReference type="BioGRID" id="19863">
    <property type="interactions" value="18"/>
</dbReference>
<dbReference type="FunCoup" id="Q9FK68">
    <property type="interactions" value="3193"/>
</dbReference>
<dbReference type="IntAct" id="Q9FK68">
    <property type="interactions" value="17"/>
</dbReference>
<dbReference type="STRING" id="3702.Q9FK68"/>
<dbReference type="iPTMnet" id="Q9FK68"/>
<dbReference type="PaxDb" id="3702-AT5G45750.1"/>
<dbReference type="ProteomicsDB" id="226096"/>
<dbReference type="EnsemblPlants" id="AT5G45750.1">
    <property type="protein sequence ID" value="AT5G45750.1"/>
    <property type="gene ID" value="AT5G45750"/>
</dbReference>
<dbReference type="GeneID" id="834614"/>
<dbReference type="Gramene" id="AT5G45750.1">
    <property type="protein sequence ID" value="AT5G45750.1"/>
    <property type="gene ID" value="AT5G45750"/>
</dbReference>
<dbReference type="KEGG" id="ath:AT5G45750"/>
<dbReference type="Araport" id="AT5G45750"/>
<dbReference type="TAIR" id="AT5G45750">
    <property type="gene designation" value="RABA1C"/>
</dbReference>
<dbReference type="eggNOG" id="KOG0087">
    <property type="taxonomic scope" value="Eukaryota"/>
</dbReference>
<dbReference type="HOGENOM" id="CLU_041217_23_0_1"/>
<dbReference type="InParanoid" id="Q9FK68"/>
<dbReference type="OMA" id="CTRSCNI"/>
<dbReference type="OrthoDB" id="9989112at2759"/>
<dbReference type="PhylomeDB" id="Q9FK68"/>
<dbReference type="PRO" id="PR:Q9FK68"/>
<dbReference type="Proteomes" id="UP000006548">
    <property type="component" value="Chromosome 5"/>
</dbReference>
<dbReference type="ExpressionAtlas" id="Q9FK68">
    <property type="expression patterns" value="baseline and differential"/>
</dbReference>
<dbReference type="GO" id="GO:0005634">
    <property type="term" value="C:nucleus"/>
    <property type="evidence" value="ECO:0007005"/>
    <property type="project" value="TAIR"/>
</dbReference>
<dbReference type="GO" id="GO:0005886">
    <property type="term" value="C:plasma membrane"/>
    <property type="evidence" value="ECO:0007005"/>
    <property type="project" value="TAIR"/>
</dbReference>
<dbReference type="GO" id="GO:0009536">
    <property type="term" value="C:plastid"/>
    <property type="evidence" value="ECO:0007005"/>
    <property type="project" value="TAIR"/>
</dbReference>
<dbReference type="GO" id="GO:0005773">
    <property type="term" value="C:vacuole"/>
    <property type="evidence" value="ECO:0007005"/>
    <property type="project" value="TAIR"/>
</dbReference>
<dbReference type="GO" id="GO:0005525">
    <property type="term" value="F:GTP binding"/>
    <property type="evidence" value="ECO:0007669"/>
    <property type="project" value="UniProtKB-KW"/>
</dbReference>
<dbReference type="GO" id="GO:0003924">
    <property type="term" value="F:GTPase activity"/>
    <property type="evidence" value="ECO:0007669"/>
    <property type="project" value="InterPro"/>
</dbReference>
<dbReference type="GO" id="GO:0042546">
    <property type="term" value="P:cell wall biogenesis"/>
    <property type="evidence" value="ECO:0000315"/>
    <property type="project" value="TAIR"/>
</dbReference>
<dbReference type="GO" id="GO:0015031">
    <property type="term" value="P:protein transport"/>
    <property type="evidence" value="ECO:0007669"/>
    <property type="project" value="UniProtKB-KW"/>
</dbReference>
<dbReference type="CDD" id="cd01868">
    <property type="entry name" value="Rab11_like"/>
    <property type="match status" value="1"/>
</dbReference>
<dbReference type="FunFam" id="3.40.50.300:FF:000067">
    <property type="entry name" value="ras-related protein RABA1f"/>
    <property type="match status" value="1"/>
</dbReference>
<dbReference type="Gene3D" id="3.40.50.300">
    <property type="entry name" value="P-loop containing nucleotide triphosphate hydrolases"/>
    <property type="match status" value="1"/>
</dbReference>
<dbReference type="InterPro" id="IPR027417">
    <property type="entry name" value="P-loop_NTPase"/>
</dbReference>
<dbReference type="InterPro" id="IPR050209">
    <property type="entry name" value="Rab_GTPases_membrane_traffic"/>
</dbReference>
<dbReference type="InterPro" id="IPR005225">
    <property type="entry name" value="Small_GTP-bd"/>
</dbReference>
<dbReference type="InterPro" id="IPR001806">
    <property type="entry name" value="Small_GTPase"/>
</dbReference>
<dbReference type="NCBIfam" id="TIGR00231">
    <property type="entry name" value="small_GTP"/>
    <property type="match status" value="1"/>
</dbReference>
<dbReference type="PANTHER" id="PTHR47979">
    <property type="entry name" value="DRAB11-RELATED"/>
    <property type="match status" value="1"/>
</dbReference>
<dbReference type="Pfam" id="PF00071">
    <property type="entry name" value="Ras"/>
    <property type="match status" value="1"/>
</dbReference>
<dbReference type="PRINTS" id="PR00449">
    <property type="entry name" value="RASTRNSFRMNG"/>
</dbReference>
<dbReference type="SMART" id="SM00175">
    <property type="entry name" value="RAB"/>
    <property type="match status" value="1"/>
</dbReference>
<dbReference type="SMART" id="SM00176">
    <property type="entry name" value="RAN"/>
    <property type="match status" value="1"/>
</dbReference>
<dbReference type="SMART" id="SM00173">
    <property type="entry name" value="RAS"/>
    <property type="match status" value="1"/>
</dbReference>
<dbReference type="SMART" id="SM00174">
    <property type="entry name" value="RHO"/>
    <property type="match status" value="1"/>
</dbReference>
<dbReference type="SUPFAM" id="SSF52540">
    <property type="entry name" value="P-loop containing nucleoside triphosphate hydrolases"/>
    <property type="match status" value="1"/>
</dbReference>
<dbReference type="PROSITE" id="PS51419">
    <property type="entry name" value="RAB"/>
    <property type="match status" value="1"/>
</dbReference>
<name>RAA1C_ARATH</name>
<protein>
    <recommendedName>
        <fullName>Ras-related protein RABA1c</fullName>
        <shortName>AtRABA1c</shortName>
    </recommendedName>
</protein>
<accession>Q9FK68</accession>
<accession>Q8LGG9</accession>